<comment type="function">
    <text evidence="1">One of several proteins that assist in the late maturation steps of the functional core of the 30S ribosomal subunit. Associates with free 30S ribosomal subunits (but not with 30S subunits that are part of 70S ribosomes or polysomes). Required for efficient processing of 16S rRNA. May interact with the 5'-terminal helix region of 16S rRNA.</text>
</comment>
<comment type="subunit">
    <text evidence="1">Monomer. Binds 30S ribosomal subunits, but not 50S ribosomal subunits or 70S ribosomes.</text>
</comment>
<comment type="subcellular location">
    <subcellularLocation>
        <location evidence="1">Cytoplasm</location>
    </subcellularLocation>
</comment>
<comment type="similarity">
    <text evidence="1">Belongs to the RbfA family.</text>
</comment>
<organism>
    <name type="scientific">Thermomicrobium roseum (strain ATCC 27502 / DSM 5159 / P-2)</name>
    <dbReference type="NCBI Taxonomy" id="309801"/>
    <lineage>
        <taxon>Bacteria</taxon>
        <taxon>Pseudomonadati</taxon>
        <taxon>Thermomicrobiota</taxon>
        <taxon>Thermomicrobia</taxon>
        <taxon>Thermomicrobiales</taxon>
        <taxon>Thermomicrobiaceae</taxon>
        <taxon>Thermomicrobium</taxon>
    </lineage>
</organism>
<name>RBFA_THERP</name>
<proteinExistence type="inferred from homology"/>
<protein>
    <recommendedName>
        <fullName evidence="1">Ribosome-binding factor A</fullName>
    </recommendedName>
</protein>
<keyword id="KW-0963">Cytoplasm</keyword>
<keyword id="KW-1185">Reference proteome</keyword>
<keyword id="KW-0690">Ribosome biogenesis</keyword>
<dbReference type="EMBL" id="CP001275">
    <property type="protein sequence ID" value="ACM04776.1"/>
    <property type="molecule type" value="Genomic_DNA"/>
</dbReference>
<dbReference type="RefSeq" id="WP_012642158.1">
    <property type="nucleotide sequence ID" value="NC_011959.1"/>
</dbReference>
<dbReference type="SMR" id="B9KZ59"/>
<dbReference type="STRING" id="309801.trd_0772"/>
<dbReference type="KEGG" id="tro:trd_0772"/>
<dbReference type="eggNOG" id="COG0858">
    <property type="taxonomic scope" value="Bacteria"/>
</dbReference>
<dbReference type="HOGENOM" id="CLU_089475_6_3_0"/>
<dbReference type="OrthoDB" id="307788at2"/>
<dbReference type="Proteomes" id="UP000000447">
    <property type="component" value="Chromosome"/>
</dbReference>
<dbReference type="GO" id="GO:0005829">
    <property type="term" value="C:cytosol"/>
    <property type="evidence" value="ECO:0007669"/>
    <property type="project" value="TreeGrafter"/>
</dbReference>
<dbReference type="GO" id="GO:0043024">
    <property type="term" value="F:ribosomal small subunit binding"/>
    <property type="evidence" value="ECO:0007669"/>
    <property type="project" value="TreeGrafter"/>
</dbReference>
<dbReference type="GO" id="GO:0030490">
    <property type="term" value="P:maturation of SSU-rRNA"/>
    <property type="evidence" value="ECO:0007669"/>
    <property type="project" value="UniProtKB-UniRule"/>
</dbReference>
<dbReference type="Gene3D" id="3.30.300.20">
    <property type="match status" value="1"/>
</dbReference>
<dbReference type="HAMAP" id="MF_00003">
    <property type="entry name" value="RbfA"/>
    <property type="match status" value="1"/>
</dbReference>
<dbReference type="InterPro" id="IPR015946">
    <property type="entry name" value="KH_dom-like_a/b"/>
</dbReference>
<dbReference type="InterPro" id="IPR000238">
    <property type="entry name" value="RbfA"/>
</dbReference>
<dbReference type="InterPro" id="IPR023799">
    <property type="entry name" value="RbfA_dom_sf"/>
</dbReference>
<dbReference type="NCBIfam" id="TIGR00082">
    <property type="entry name" value="rbfA"/>
    <property type="match status" value="1"/>
</dbReference>
<dbReference type="PANTHER" id="PTHR33515">
    <property type="entry name" value="RIBOSOME-BINDING FACTOR A, CHLOROPLASTIC-RELATED"/>
    <property type="match status" value="1"/>
</dbReference>
<dbReference type="PANTHER" id="PTHR33515:SF1">
    <property type="entry name" value="RIBOSOME-BINDING FACTOR A, CHLOROPLASTIC-RELATED"/>
    <property type="match status" value="1"/>
</dbReference>
<dbReference type="Pfam" id="PF02033">
    <property type="entry name" value="RBFA"/>
    <property type="match status" value="1"/>
</dbReference>
<dbReference type="SUPFAM" id="SSF89919">
    <property type="entry name" value="Ribosome-binding factor A, RbfA"/>
    <property type="match status" value="1"/>
</dbReference>
<sequence length="129" mass="14929">MPSYRQARLAEFLRDEIAAIIQRELRDPRLGFVSVTRVEMSPDLRHAKVFVSIYGSHEEQEAALEALQGAAGFIRRLIAPHLHTRHIPELHFKLDRSLEHAEQVARLLRQIQQERQRDESAVESTPESE</sequence>
<feature type="chain" id="PRO_1000116222" description="Ribosome-binding factor A">
    <location>
        <begin position="1"/>
        <end position="129"/>
    </location>
</feature>
<reference key="1">
    <citation type="journal article" date="2009" name="PLoS ONE">
        <title>Complete genome sequence of the aerobic CO-oxidizing thermophile Thermomicrobium roseum.</title>
        <authorList>
            <person name="Wu D."/>
            <person name="Raymond J."/>
            <person name="Wu M."/>
            <person name="Chatterji S."/>
            <person name="Ren Q."/>
            <person name="Graham J.E."/>
            <person name="Bryant D.A."/>
            <person name="Robb F."/>
            <person name="Colman A."/>
            <person name="Tallon L.J."/>
            <person name="Badger J.H."/>
            <person name="Madupu R."/>
            <person name="Ward N.L."/>
            <person name="Eisen J.A."/>
        </authorList>
    </citation>
    <scope>NUCLEOTIDE SEQUENCE [LARGE SCALE GENOMIC DNA]</scope>
    <source>
        <strain>ATCC 27502 / DSM 5159 / P-2</strain>
    </source>
</reference>
<accession>B9KZ59</accession>
<evidence type="ECO:0000255" key="1">
    <source>
        <dbReference type="HAMAP-Rule" id="MF_00003"/>
    </source>
</evidence>
<gene>
    <name evidence="1" type="primary">rbfA</name>
    <name type="ordered locus">trd_0772</name>
</gene>